<accession>Q4R6L9</accession>
<accession>G7P7U7</accession>
<protein>
    <recommendedName>
        <fullName>Serine incorporator 5</fullName>
    </recommendedName>
</protein>
<dbReference type="EMBL" id="AB169164">
    <property type="protein sequence ID" value="BAE01256.1"/>
    <property type="molecule type" value="mRNA"/>
</dbReference>
<dbReference type="EMBL" id="CM001281">
    <property type="protein sequence ID" value="EHH54368.1"/>
    <property type="status" value="ALT_SEQ"/>
    <property type="molecule type" value="Genomic_DNA"/>
</dbReference>
<dbReference type="RefSeq" id="NP_001271589.1">
    <property type="nucleotide sequence ID" value="NM_001284660.1"/>
</dbReference>
<dbReference type="RefSeq" id="XP_065402481.1">
    <property type="nucleotide sequence ID" value="XM_065546409.1"/>
</dbReference>
<dbReference type="RefSeq" id="XP_065402482.1">
    <property type="nucleotide sequence ID" value="XM_065546410.1"/>
</dbReference>
<dbReference type="SMR" id="Q4R6L9"/>
<dbReference type="STRING" id="9541.ENSMFAP00000039686"/>
<dbReference type="GlyCosmos" id="Q4R6L9">
    <property type="glycosylation" value="2 sites, No reported glycans"/>
</dbReference>
<dbReference type="GeneID" id="101925282"/>
<dbReference type="eggNOG" id="KOG2592">
    <property type="taxonomic scope" value="Eukaryota"/>
</dbReference>
<dbReference type="Proteomes" id="UP000009130">
    <property type="component" value="Chromosome 6"/>
</dbReference>
<dbReference type="Proteomes" id="UP000233100">
    <property type="component" value="Unplaced"/>
</dbReference>
<dbReference type="GO" id="GO:0005886">
    <property type="term" value="C:plasma membrane"/>
    <property type="evidence" value="ECO:0000250"/>
    <property type="project" value="UniProtKB"/>
</dbReference>
<dbReference type="GO" id="GO:0017128">
    <property type="term" value="F:phospholipid scramblase activity"/>
    <property type="evidence" value="ECO:0000250"/>
    <property type="project" value="UniProtKB"/>
</dbReference>
<dbReference type="GO" id="GO:0140374">
    <property type="term" value="P:antiviral innate immune response"/>
    <property type="evidence" value="ECO:0000250"/>
    <property type="project" value="UniProtKB"/>
</dbReference>
<dbReference type="GO" id="GO:0008654">
    <property type="term" value="P:phospholipid biosynthetic process"/>
    <property type="evidence" value="ECO:0007669"/>
    <property type="project" value="UniProtKB-KW"/>
</dbReference>
<dbReference type="GO" id="GO:0017121">
    <property type="term" value="P:plasma membrane phospholipid scrambling"/>
    <property type="evidence" value="ECO:0000250"/>
    <property type="project" value="UniProtKB"/>
</dbReference>
<dbReference type="InterPro" id="IPR005016">
    <property type="entry name" value="TDE1/TMS"/>
</dbReference>
<dbReference type="PANTHER" id="PTHR10383">
    <property type="entry name" value="SERINE INCORPORATOR"/>
    <property type="match status" value="1"/>
</dbReference>
<dbReference type="PANTHER" id="PTHR10383:SF16">
    <property type="entry name" value="SERINE INCORPORATOR 5"/>
    <property type="match status" value="1"/>
</dbReference>
<dbReference type="Pfam" id="PF03348">
    <property type="entry name" value="Serinc"/>
    <property type="match status" value="1"/>
</dbReference>
<sequence length="424" mass="47420">MYALYFILVVVLCCIMMSTTVAHKMKEHIPFFEDMCKGIKAGDTCEKLVGYSAVYRVCFGMACFFFIFCLLTLKINNSKSCRAHIHNGFWFFKLLLLGAMCSGAFFIPDQDTFLNAWRYVGAVGGFLFIGIQLLLLVEFAHKWNKNWTAGTASNKLWYASLALVTLIMYSIATGGLVLMAVFYTQKDGCMENKILLGVNGGLCVLISLVAISPCVQNRQPHSGLLQSGVISCYVTYLTFSALSSKPAEVVLDEHGKNVTICVPDFGQDLYRDENLVTILGTSLLIGCILYSCLTSTTRSSSDALQGRYAAPELEIARCCFCFSPGGEDTEEQQQGKEGPRVIYDEKKGTVYIYSYFHFVFFLASLYVMMTVTNWFNYESANIESFFSGSWSIFWVKMASCWICVLLYLCTLVAPLCCPTREFSV</sequence>
<evidence type="ECO:0000250" key="1">
    <source>
        <dbReference type="UniProtKB" id="Q63175"/>
    </source>
</evidence>
<evidence type="ECO:0000250" key="2">
    <source>
        <dbReference type="UniProtKB" id="Q86VE9"/>
    </source>
</evidence>
<evidence type="ECO:0000255" key="3"/>
<evidence type="ECO:0000303" key="4">
    <source ref="1"/>
</evidence>
<evidence type="ECO:0000305" key="5"/>
<feature type="chain" id="PRO_0000330631" description="Serine incorporator 5">
    <location>
        <begin position="1"/>
        <end position="424"/>
    </location>
</feature>
<feature type="topological domain" description="Extracellular" evidence="3">
    <location>
        <begin position="1"/>
        <end position="6"/>
    </location>
</feature>
<feature type="transmembrane region" description="Helical" evidence="3">
    <location>
        <begin position="7"/>
        <end position="23"/>
    </location>
</feature>
<feature type="topological domain" description="Cytoplasmic" evidence="3">
    <location>
        <begin position="24"/>
        <end position="52"/>
    </location>
</feature>
<feature type="transmembrane region" description="Helical" evidence="3">
    <location>
        <begin position="53"/>
        <end position="73"/>
    </location>
</feature>
<feature type="topological domain" description="Extracellular" evidence="3">
    <location>
        <begin position="74"/>
        <end position="87"/>
    </location>
</feature>
<feature type="transmembrane region" description="Helical" evidence="3">
    <location>
        <begin position="88"/>
        <end position="108"/>
    </location>
</feature>
<feature type="topological domain" description="Cytoplasmic" evidence="3">
    <location>
        <begin position="109"/>
        <end position="119"/>
    </location>
</feature>
<feature type="transmembrane region" description="Helical" evidence="3">
    <location>
        <begin position="120"/>
        <end position="140"/>
    </location>
</feature>
<feature type="topological domain" description="Extracellular" evidence="3">
    <location>
        <begin position="141"/>
        <end position="161"/>
    </location>
</feature>
<feature type="transmembrane region" description="Helical" evidence="3">
    <location>
        <begin position="162"/>
        <end position="182"/>
    </location>
</feature>
<feature type="topological domain" description="Cytoplasmic" evidence="3">
    <location>
        <begin position="183"/>
        <end position="193"/>
    </location>
</feature>
<feature type="transmembrane region" description="Helical" evidence="3">
    <location>
        <begin position="194"/>
        <end position="214"/>
    </location>
</feature>
<feature type="topological domain" description="Extracellular" evidence="3">
    <location>
        <begin position="215"/>
        <end position="221"/>
    </location>
</feature>
<feature type="transmembrane region" description="Helical" evidence="3">
    <location>
        <begin position="222"/>
        <end position="242"/>
    </location>
</feature>
<feature type="topological domain" description="Cytoplasmic" evidence="3">
    <location>
        <begin position="243"/>
        <end position="274"/>
    </location>
</feature>
<feature type="transmembrane region" description="Helical" evidence="3">
    <location>
        <begin position="275"/>
        <end position="295"/>
    </location>
</feature>
<feature type="topological domain" description="Extracellular" evidence="3">
    <location>
        <begin position="296"/>
        <end position="348"/>
    </location>
</feature>
<feature type="transmembrane region" description="Helical" evidence="3">
    <location>
        <begin position="349"/>
        <end position="369"/>
    </location>
</feature>
<feature type="topological domain" description="Cytoplasmic" evidence="3">
    <location>
        <begin position="370"/>
        <end position="391"/>
    </location>
</feature>
<feature type="transmembrane region" description="Helical" evidence="3">
    <location>
        <begin position="392"/>
        <end position="412"/>
    </location>
</feature>
<feature type="topological domain" description="Extracellular" evidence="3">
    <location>
        <begin position="413"/>
        <end position="424"/>
    </location>
</feature>
<feature type="glycosylation site" description="N-linked (GlcNAc...) asparagine" evidence="3">
    <location>
        <position position="76"/>
    </location>
</feature>
<feature type="glycosylation site" description="N-linked (GlcNAc...) asparagine" evidence="3">
    <location>
        <position position="146"/>
    </location>
</feature>
<organism>
    <name type="scientific">Macaca fascicularis</name>
    <name type="common">Crab-eating macaque</name>
    <name type="synonym">Cynomolgus monkey</name>
    <dbReference type="NCBI Taxonomy" id="9541"/>
    <lineage>
        <taxon>Eukaryota</taxon>
        <taxon>Metazoa</taxon>
        <taxon>Chordata</taxon>
        <taxon>Craniata</taxon>
        <taxon>Vertebrata</taxon>
        <taxon>Euteleostomi</taxon>
        <taxon>Mammalia</taxon>
        <taxon>Eutheria</taxon>
        <taxon>Euarchontoglires</taxon>
        <taxon>Primates</taxon>
        <taxon>Haplorrhini</taxon>
        <taxon>Catarrhini</taxon>
        <taxon>Cercopithecidae</taxon>
        <taxon>Cercopithecinae</taxon>
        <taxon>Macaca</taxon>
    </lineage>
</organism>
<proteinExistence type="evidence at transcript level"/>
<comment type="function">
    <text evidence="1 2">Restriction factor required to restrict infectivity of gammaretroviruses: acts by inhibiting an early step of viral infection. Impairs the penetration of the viral particle into the cytoplasm. Non-ATP-dependent, non-specific lipid transporter for phosphatidylserine, phosphatidylcholine, and phosphatidylethanolamine. Functions as a scramblase that flips lipids in both directions across the membrane. Phospholipid scrambling results in gammaretroviral surface exposure of phosphatidylserine and loss of membrane asymmetry, which leads to loss of infectivity (By similarity). Enhances the incorporation of serine into phosphatidylserine and sphingolipids. May play a role in providing serine molecules for the formation of myelin glycosphingolipids in oligodendrocytes (By similarity).</text>
</comment>
<comment type="catalytic activity">
    <reaction evidence="2">
        <text>a 1,2-diacyl-sn-glycero-3-phospho-L-serine(in) = a 1,2-diacyl-sn-glycero-3-phospho-L-serine(out)</text>
        <dbReference type="Rhea" id="RHEA:38663"/>
        <dbReference type="ChEBI" id="CHEBI:57262"/>
    </reaction>
</comment>
<comment type="catalytic activity">
    <reaction evidence="2">
        <text>a 1,2-diacyl-sn-glycero-3-phosphocholine(in) = a 1,2-diacyl-sn-glycero-3-phosphocholine(out)</text>
        <dbReference type="Rhea" id="RHEA:38571"/>
        <dbReference type="ChEBI" id="CHEBI:57643"/>
    </reaction>
</comment>
<comment type="catalytic activity">
    <reaction evidence="2">
        <text>a 1,2-diacyl-sn-glycero-3-phosphoethanolamine(in) = a 1,2-diacyl-sn-glycero-3-phosphoethanolamine(out)</text>
        <dbReference type="Rhea" id="RHEA:38895"/>
        <dbReference type="ChEBI" id="CHEBI:64612"/>
    </reaction>
</comment>
<comment type="subcellular location">
    <subcellularLocation>
        <location evidence="2">Cell membrane</location>
        <topology evidence="3">Multi-pass membrane protein</topology>
    </subcellularLocation>
    <text evidence="2">Localizes to the cell membrane, where it is efficiently incorporated into budding gammaretrovirus virions and impairs subsequent virion penetration of susceptible target cells.</text>
</comment>
<comment type="similarity">
    <text evidence="5">Belongs to the TDE1 family.</text>
</comment>
<comment type="sequence caution" evidence="5">
    <conflict type="erroneous gene model prediction">
        <sequence resource="EMBL-CDS" id="EHH54368"/>
    </conflict>
</comment>
<keyword id="KW-0051">Antiviral defense</keyword>
<keyword id="KW-1003">Cell membrane</keyword>
<keyword id="KW-0325">Glycoprotein</keyword>
<keyword id="KW-0391">Immunity</keyword>
<keyword id="KW-0399">Innate immunity</keyword>
<keyword id="KW-0444">Lipid biosynthesis</keyword>
<keyword id="KW-0443">Lipid metabolism</keyword>
<keyword id="KW-0472">Membrane</keyword>
<keyword id="KW-0594">Phospholipid biosynthesis</keyword>
<keyword id="KW-1208">Phospholipid metabolism</keyword>
<keyword id="KW-1185">Reference proteome</keyword>
<keyword id="KW-0812">Transmembrane</keyword>
<keyword id="KW-1133">Transmembrane helix</keyword>
<name>SERC5_MACFA</name>
<reference key="1">
    <citation type="submission" date="2005-06" db="EMBL/GenBank/DDBJ databases">
        <title>DNA sequences of macaque genes expressed in brain or testis and its evolutionary implications.</title>
        <authorList>
            <consortium name="International consortium for macaque cDNA sequencing and analysis"/>
        </authorList>
    </citation>
    <scope>NUCLEOTIDE SEQUENCE [LARGE SCALE MRNA]</scope>
    <source>
        <tissue>Testis</tissue>
    </source>
</reference>
<reference key="2">
    <citation type="journal article" date="2011" name="Nat. Biotechnol.">
        <title>Genome sequencing and comparison of two nonhuman primate animal models, the cynomolgus and Chinese rhesus macaques.</title>
        <authorList>
            <person name="Yan G."/>
            <person name="Zhang G."/>
            <person name="Fang X."/>
            <person name="Zhang Y."/>
            <person name="Li C."/>
            <person name="Ling F."/>
            <person name="Cooper D.N."/>
            <person name="Li Q."/>
            <person name="Li Y."/>
            <person name="van Gool A.J."/>
            <person name="Du H."/>
            <person name="Chen J."/>
            <person name="Chen R."/>
            <person name="Zhang P."/>
            <person name="Huang Z."/>
            <person name="Thompson J.R."/>
            <person name="Meng Y."/>
            <person name="Bai Y."/>
            <person name="Wang J."/>
            <person name="Zhuo M."/>
            <person name="Wang T."/>
            <person name="Huang Y."/>
            <person name="Wei L."/>
            <person name="Li J."/>
            <person name="Wang Z."/>
            <person name="Hu H."/>
            <person name="Yang P."/>
            <person name="Le L."/>
            <person name="Stenson P.D."/>
            <person name="Li B."/>
            <person name="Liu X."/>
            <person name="Ball E.V."/>
            <person name="An N."/>
            <person name="Huang Q."/>
            <person name="Zhang Y."/>
            <person name="Fan W."/>
            <person name="Zhang X."/>
            <person name="Li Y."/>
            <person name="Wang W."/>
            <person name="Katze M.G."/>
            <person name="Su B."/>
            <person name="Nielsen R."/>
            <person name="Yang H."/>
            <person name="Wang J."/>
            <person name="Wang X."/>
            <person name="Wang J."/>
        </authorList>
    </citation>
    <scope>NUCLEOTIDE SEQUENCE [LARGE SCALE GENOMIC DNA]</scope>
    <source>
        <strain>CE-4</strain>
    </source>
</reference>
<gene>
    <name type="primary">SERINC5</name>
    <name type="ORF">EGM_15191</name>
    <name evidence="4" type="ORF">QtsA-17704</name>
</gene>